<organism>
    <name type="scientific">Homo sapiens</name>
    <name type="common">Human</name>
    <dbReference type="NCBI Taxonomy" id="9606"/>
    <lineage>
        <taxon>Eukaryota</taxon>
        <taxon>Metazoa</taxon>
        <taxon>Chordata</taxon>
        <taxon>Craniata</taxon>
        <taxon>Vertebrata</taxon>
        <taxon>Euteleostomi</taxon>
        <taxon>Mammalia</taxon>
        <taxon>Eutheria</taxon>
        <taxon>Euarchontoglires</taxon>
        <taxon>Primates</taxon>
        <taxon>Haplorrhini</taxon>
        <taxon>Catarrhini</taxon>
        <taxon>Hominidae</taxon>
        <taxon>Homo</taxon>
    </lineage>
</organism>
<feature type="chain" id="PRO_0000086810" description="Wee1-like protein kinase">
    <location>
        <begin position="1"/>
        <end position="646"/>
    </location>
</feature>
<feature type="domain" description="Protein kinase" evidence="3">
    <location>
        <begin position="299"/>
        <end position="569"/>
    </location>
</feature>
<feature type="region of interest" description="Disordered" evidence="5">
    <location>
        <begin position="1"/>
        <end position="181"/>
    </location>
</feature>
<feature type="compositionally biased region" description="Acidic residues" evidence="5">
    <location>
        <begin position="32"/>
        <end position="43"/>
    </location>
</feature>
<feature type="compositionally biased region" description="Low complexity" evidence="5">
    <location>
        <begin position="94"/>
        <end position="103"/>
    </location>
</feature>
<feature type="compositionally biased region" description="Basic and acidic residues" evidence="5">
    <location>
        <begin position="158"/>
        <end position="170"/>
    </location>
</feature>
<feature type="active site" description="Proton acceptor" evidence="3 4">
    <location>
        <position position="426"/>
    </location>
</feature>
<feature type="binding site" evidence="3">
    <location>
        <begin position="305"/>
        <end position="313"/>
    </location>
    <ligand>
        <name>ATP</name>
        <dbReference type="ChEBI" id="CHEBI:30616"/>
    </ligand>
</feature>
<feature type="binding site" evidence="3">
    <location>
        <position position="328"/>
    </location>
    <ligand>
        <name>ATP</name>
        <dbReference type="ChEBI" id="CHEBI:30616"/>
    </ligand>
</feature>
<feature type="binding site" evidence="8">
    <location>
        <position position="342"/>
    </location>
    <ligand>
        <name>Mg(2+)</name>
        <dbReference type="ChEBI" id="CHEBI:18420"/>
        <label>2</label>
    </ligand>
</feature>
<feature type="binding site" evidence="8">
    <location>
        <position position="431"/>
    </location>
    <ligand>
        <name>Mg(2+)</name>
        <dbReference type="ChEBI" id="CHEBI:18420"/>
        <label>1</label>
    </ligand>
</feature>
<feature type="binding site" evidence="8">
    <location>
        <position position="463"/>
    </location>
    <ligand>
        <name>Mg(2+)</name>
        <dbReference type="ChEBI" id="CHEBI:18420"/>
        <label>1</label>
    </ligand>
</feature>
<feature type="binding site" evidence="8">
    <location>
        <position position="465"/>
    </location>
    <ligand>
        <name>Mg(2+)</name>
        <dbReference type="ChEBI" id="CHEBI:18420"/>
        <label>2</label>
    </ligand>
</feature>
<feature type="modified residue" description="Phosphoserine; by PLK1" evidence="6">
    <location>
        <position position="53"/>
    </location>
</feature>
<feature type="modified residue" description="Phosphoserine" evidence="2">
    <location>
        <position position="78"/>
    </location>
</feature>
<feature type="modified residue" description="Phosphoserine" evidence="20">
    <location>
        <position position="85"/>
    </location>
</feature>
<feature type="modified residue" description="Phosphoserine; by CDK1" evidence="6">
    <location>
        <position position="123"/>
    </location>
</feature>
<feature type="modified residue" description="Phosphoserine" evidence="22">
    <location>
        <position position="127"/>
    </location>
</feature>
<feature type="modified residue" description="Phosphoserine" evidence="23">
    <location>
        <position position="137"/>
    </location>
</feature>
<feature type="modified residue" description="Phosphoserine" evidence="21 22 23">
    <location>
        <position position="139"/>
    </location>
</feature>
<feature type="modified residue" description="Phosphoserine" evidence="20">
    <location>
        <position position="150"/>
    </location>
</feature>
<feature type="modified residue" description="Phosphoserine" evidence="1">
    <location>
        <position position="165"/>
    </location>
</feature>
<feature type="modified residue" description="Phosphothreonine" evidence="23">
    <location>
        <position position="187"/>
    </location>
</feature>
<feature type="modified residue" description="Phosphothreonine" evidence="20 23">
    <location>
        <position position="190"/>
    </location>
</feature>
<feature type="modified residue" description="Phosphothreonine" evidence="11">
    <location>
        <position position="239"/>
    </location>
</feature>
<feature type="modified residue" description="Phosphoserine" evidence="23">
    <location>
        <position position="270"/>
    </location>
</feature>
<feature type="modified residue" description="Phosphoserine" evidence="23">
    <location>
        <position position="307"/>
    </location>
</feature>
<feature type="modified residue" description="Phosphoserine" evidence="20 23">
    <location>
        <position position="312"/>
    </location>
</feature>
<feature type="modified residue" description="Phosphoserine; by BRSK1 and BRSK2" evidence="7 10">
    <location>
        <position position="642"/>
    </location>
</feature>
<feature type="splice variant" id="VSP_044959" description="In isoform 2." evidence="16">
    <location>
        <begin position="1"/>
        <end position="214"/>
    </location>
</feature>
<feature type="sequence variant" id="VAR_041302" description="In dbSNP:rs34412975." evidence="9">
    <original>G</original>
    <variation>C</variation>
    <location>
        <position position="210"/>
    </location>
</feature>
<feature type="sequence variant" id="VAR_041303" description="In dbSNP:rs56411856." evidence="9">
    <original>S</original>
    <variation>I</variation>
    <location>
        <position position="472"/>
    </location>
</feature>
<feature type="mutagenesis site" description="Abolishes phosphorylation by PLK1 and CDK1 and binding of the SCF(BTRC) complex, leading to stabilization of the protein; when associated with A-123." evidence="6">
    <original>S</original>
    <variation>A</variation>
    <location>
        <position position="53"/>
    </location>
</feature>
<feature type="mutagenesis site" description="Impairs binding of the SCF(BTRC) complex." evidence="6">
    <original>EE</original>
    <variation>AA</variation>
    <location>
        <begin position="116"/>
        <end position="117"/>
    </location>
</feature>
<feature type="mutagenesis site" description="Abolishes phosphorylation by PLK1 and CDK1 and binding of the SCF(BTRC) complex, leading to stabilization of the protein; when associated with A-53." evidence="6">
    <original>S</original>
    <variation>A</variation>
    <location>
        <position position="123"/>
    </location>
</feature>
<feature type="mutagenesis site" description="Abolishes activity." evidence="15">
    <original>K</original>
    <variation>R</variation>
    <location>
        <position position="328"/>
    </location>
</feature>
<feature type="mutagenesis site" description="Abolishes phosphorylation by BRSK1 and BRSK2." evidence="10">
    <original>S</original>
    <variation>A</variation>
    <location>
        <position position="642"/>
    </location>
</feature>
<feature type="sequence conflict" description="In Ref. 6; CAA43979." evidence="18" ref="6">
    <original>A</original>
    <variation>E</variation>
    <location>
        <position position="65"/>
    </location>
</feature>
<feature type="helix" evidence="26">
    <location>
        <begin position="294"/>
        <end position="298"/>
    </location>
</feature>
<feature type="strand" evidence="26">
    <location>
        <begin position="299"/>
        <end position="308"/>
    </location>
</feature>
<feature type="strand" evidence="26">
    <location>
        <begin position="311"/>
        <end position="318"/>
    </location>
</feature>
<feature type="turn" evidence="26">
    <location>
        <begin position="319"/>
        <end position="321"/>
    </location>
</feature>
<feature type="strand" evidence="26">
    <location>
        <begin position="324"/>
        <end position="331"/>
    </location>
</feature>
<feature type="strand" evidence="24">
    <location>
        <begin position="335"/>
        <end position="337"/>
    </location>
</feature>
<feature type="helix" evidence="26">
    <location>
        <begin position="338"/>
        <end position="352"/>
    </location>
</feature>
<feature type="strand" evidence="26">
    <location>
        <begin position="362"/>
        <end position="368"/>
    </location>
</feature>
<feature type="strand" evidence="26">
    <location>
        <begin position="371"/>
        <end position="377"/>
    </location>
</feature>
<feature type="helix" evidence="26">
    <location>
        <begin position="384"/>
        <end position="393"/>
    </location>
</feature>
<feature type="helix" evidence="26">
    <location>
        <begin position="400"/>
        <end position="419"/>
    </location>
</feature>
<feature type="helix" evidence="26">
    <location>
        <begin position="429"/>
        <end position="431"/>
    </location>
</feature>
<feature type="strand" evidence="26">
    <location>
        <begin position="432"/>
        <end position="435"/>
    </location>
</feature>
<feature type="strand" evidence="26">
    <location>
        <begin position="458"/>
        <end position="461"/>
    </location>
</feature>
<feature type="helix" evidence="26">
    <location>
        <begin position="464"/>
        <end position="466"/>
    </location>
</feature>
<feature type="strand" evidence="25">
    <location>
        <begin position="468"/>
        <end position="472"/>
    </location>
</feature>
<feature type="turn" evidence="26">
    <location>
        <begin position="480"/>
        <end position="482"/>
    </location>
</feature>
<feature type="helix" evidence="26">
    <location>
        <begin position="485"/>
        <end position="488"/>
    </location>
</feature>
<feature type="helix" evidence="26">
    <location>
        <begin position="495"/>
        <end position="510"/>
    </location>
</feature>
<feature type="helix" evidence="26">
    <location>
        <begin position="520"/>
        <end position="527"/>
    </location>
</feature>
<feature type="helix" evidence="26">
    <location>
        <begin position="540"/>
        <end position="549"/>
    </location>
</feature>
<feature type="helix" evidence="26">
    <location>
        <begin position="554"/>
        <end position="556"/>
    </location>
</feature>
<feature type="helix" evidence="26">
    <location>
        <begin position="560"/>
        <end position="564"/>
    </location>
</feature>
<feature type="helix" evidence="26">
    <location>
        <begin position="567"/>
        <end position="570"/>
    </location>
</feature>
<name>WEE1_HUMAN</name>
<sequence>MSFLSRQQPPPPRRAGAACTLRQKLIFSPCSDCEEEEEEEEEEGSGHSTGEDSAFQEPDSPLPPARSPTEPGPERRRSPGPAPGSPGELEEDLLLPGACPGADEAGGGAEGDSWEEEGFGSSSPVKSPAAPYFLGSSFSPVRCGGPGDASPRGCGARRAGEGRRSPRPDHPGTPPHKTFRKLRLFDTPHTPKSLLSKARGIDSSSVKLRGSSLFMDTEKSGKREFDVRQTPQVNINPFTPDSLLLHSSGQCRRRKRTYWNDSCGEDMEASDYELEDETRPAKRITITESNMKSRYTTEFHELEKIGSGEFGSVFKCVKRLDGCIYAIKRSKKPLAGSVDEQNALREVYAHAVLGQHSHVVRYFSAWAEDDHMLIQNEYCNGGSLADAISENYRIMSYFKEAELKDLLLQVGRGLRYIHSMSLVHMDIKPSNIFISRTSIPNAASEEGDEDDWASNKVMFKIGDLGHVTRISSPQVEEGDSRFLANEVLQENYTHLPKADIFALALTVVCAAGAEPLPRNGDQWHEIRQGRLPRIPQVLSQEFTELLKVMIHPDPERRPSAMALVKHSVLLSASRKSAEQLRIELNAEKFKNSLLQKELKKAQMAKAAAEERALFTDRMATRSTTQSNRTSRLIGKKMNRSVSLTIY</sequence>
<protein>
    <recommendedName>
        <fullName>Wee1-like protein kinase</fullName>
        <shortName>WEE1hu</shortName>
        <ecNumber evidence="13 15">2.7.10.2</ecNumber>
    </recommendedName>
    <alternativeName>
        <fullName>Wee1A kinase</fullName>
    </alternativeName>
</protein>
<comment type="function">
    <text evidence="6 13 14 15">Acts as a negative regulator of entry into mitosis (G2 to M transition) by protecting the nucleus from cytoplasmically activated cyclin B1-complexed CDK1 before the onset of mitosis by mediating phosphorylation of CDK1 on 'Tyr-15' (PubMed:15070733, PubMed:7743995, PubMed:8348613, PubMed:8428596). Specifically phosphorylates and inactivates cyclin B1-complexed CDK1 reaching a maximum during G2 phase and a minimum as cells enter M phase (PubMed:7743995, PubMed:8348613, PubMed:8428596). Phosphorylation of cyclin B1-CDK1 occurs exclusively on 'Tyr-15' and phosphorylation of monomeric CDK1 does not occur (PubMed:7743995, PubMed:8348613, PubMed:8428596). Its activity increases during S and G2 phases and decreases at M phase when it is hyperphosphorylated (PubMed:7743995). A correlated decrease in protein level occurs at M/G1 phase, probably due to its degradation (PubMed:7743995).</text>
</comment>
<comment type="catalytic activity">
    <reaction evidence="4 13 14 15">
        <text>L-tyrosyl-[protein] + ATP = O-phospho-L-tyrosyl-[protein] + ADP + H(+)</text>
        <dbReference type="Rhea" id="RHEA:10596"/>
        <dbReference type="Rhea" id="RHEA-COMP:10136"/>
        <dbReference type="Rhea" id="RHEA-COMP:20101"/>
        <dbReference type="ChEBI" id="CHEBI:15378"/>
        <dbReference type="ChEBI" id="CHEBI:30616"/>
        <dbReference type="ChEBI" id="CHEBI:46858"/>
        <dbReference type="ChEBI" id="CHEBI:61978"/>
        <dbReference type="ChEBI" id="CHEBI:456216"/>
        <dbReference type="EC" id="2.7.10.2"/>
    </reaction>
    <physiologicalReaction direction="left-to-right" evidence="13 14 15">
        <dbReference type="Rhea" id="RHEA:10597"/>
    </physiologicalReaction>
</comment>
<comment type="cofactor">
    <cofactor evidence="8">
        <name>Mg(2+)</name>
        <dbReference type="ChEBI" id="CHEBI:18420"/>
    </cofactor>
    <text evidence="8">Binds 2 magnesium ions per subunit.</text>
</comment>
<comment type="activity regulation">
    <text evidence="13">Synthesis is increased during S and G2 phases, presumably by an increase in transcription; activity is decreased by phosphorylation during M phase (PubMed:7743995). Protein levels fall in M phase as a result of decreased synthesis combined with degradation (PubMed:7743995). Activity seems to be negatively regulated by phosphorylation upon entry into mitosis, although N-terminal phosphorylation might also regulate the protein stability via protection from proteolysis or might regulate the subcellular location (PubMed:7743995).</text>
</comment>
<comment type="interaction">
    <interactant intactId="EBI-914695">
        <id>P30291</id>
    </interactant>
    <interactant intactId="EBI-307461">
        <id>Q9Y297</id>
        <label>BTRC</label>
    </interactant>
    <organismsDiffer>false</organismsDiffer>
    <experiments>2</experiments>
</comment>
<comment type="interaction">
    <interactant intactId="EBI-914695">
        <id>P30291</id>
    </interactant>
    <interactant intactId="EBI-355189">
        <id>Q9UKB1</id>
        <label>FBXW11</label>
    </interactant>
    <organismsDiffer>false</organismsDiffer>
    <experiments>3</experiments>
</comment>
<comment type="interaction">
    <interactant intactId="EBI-914695">
        <id>P30291</id>
    </interactant>
    <interactant intactId="EBI-476768">
        <id>P53350</id>
        <label>PLK1</label>
    </interactant>
    <organismsDiffer>false</organismsDiffer>
    <experiments>2</experiments>
</comment>
<comment type="interaction">
    <interactant intactId="EBI-914695">
        <id>P30291</id>
    </interactant>
    <interactant intactId="EBI-476295">
        <id>P31947</id>
        <label>SFN</label>
    </interactant>
    <organismsDiffer>false</organismsDiffer>
    <experiments>5</experiments>
</comment>
<comment type="interaction">
    <interactant intactId="EBI-914695">
        <id>P30291</id>
    </interactant>
    <interactant intactId="EBI-356498">
        <id>P62258</id>
        <label>YWHAE</label>
    </interactant>
    <organismsDiffer>false</organismsDiffer>
    <experiments>2</experiments>
</comment>
<comment type="interaction">
    <interactant intactId="EBI-914695">
        <id>P30291</id>
    </interactant>
    <interactant intactId="EBI-347088">
        <id>P63104</id>
        <label>YWHAZ</label>
    </interactant>
    <organismsDiffer>false</organismsDiffer>
    <experiments>5</experiments>
</comment>
<comment type="subcellular location">
    <subcellularLocation>
        <location evidence="14">Nucleus</location>
    </subcellularLocation>
</comment>
<comment type="alternative products">
    <event type="alternative splicing"/>
    <isoform>
        <id>P30291-1</id>
        <name>1</name>
        <sequence type="displayed"/>
    </isoform>
    <isoform>
        <id>P30291-2</id>
        <name>2</name>
        <sequence type="described" ref="VSP_044959"/>
    </isoform>
</comment>
<comment type="PTM">
    <text evidence="6 7 10 11">Phosphorylated during M and G1 phases. Also autophosphorylated. Phosphorylation at Ser-642 by BRSK1 and BRSK2 in post-mitotic neurons, leads to down-regulate WEE1 activity in polarized neurons. Phosphorylated at Ser-53 and Ser-123 by PLK1 and CDK1, respectively, generating an signal for degradation that can be recognized by the SCF(BTRC) complex, leading to its ubiquitination and degradation at the onset of G2/M phase.</text>
</comment>
<comment type="PTM">
    <text evidence="11 12">Dephosphorylated at Thr-239 by CTDP1 (PubMed:22692537). Dephosphorylated at Ser-53 and Ser-123 by the serine/threonine-protein phosphatase 2A preventing its ubiquitin-mediated degradation (PubMed:33108758).</text>
</comment>
<comment type="PTM">
    <text evidence="6">Ubiquitinated and degraded at the onset of G2/M phase.</text>
</comment>
<comment type="similarity">
    <text evidence="3">Belongs to the protein kinase superfamily. Ser/Thr protein kinase family. WEE1 subfamily.</text>
</comment>
<keyword id="KW-0002">3D-structure</keyword>
<keyword id="KW-0025">Alternative splicing</keyword>
<keyword id="KW-0067">ATP-binding</keyword>
<keyword id="KW-0131">Cell cycle</keyword>
<keyword id="KW-0132">Cell division</keyword>
<keyword id="KW-0418">Kinase</keyword>
<keyword id="KW-0460">Magnesium</keyword>
<keyword id="KW-0479">Metal-binding</keyword>
<keyword id="KW-0498">Mitosis</keyword>
<keyword id="KW-0547">Nucleotide-binding</keyword>
<keyword id="KW-0539">Nucleus</keyword>
<keyword id="KW-0597">Phosphoprotein</keyword>
<keyword id="KW-1267">Proteomics identification</keyword>
<keyword id="KW-1185">Reference proteome</keyword>
<keyword id="KW-0808">Transferase</keyword>
<keyword id="KW-0829">Tyrosine-protein kinase</keyword>
<keyword id="KW-0832">Ubl conjugation</keyword>
<reference key="1">
    <citation type="journal article" date="1995" name="EMBO J.">
        <title>Regulation of the human WEE1Hu CDK tyrosine 15-kinase during the cell cycle.</title>
        <authorList>
            <person name="Watanabe N."/>
            <person name="Broome M."/>
            <person name="Hunter T."/>
        </authorList>
    </citation>
    <scope>NUCLEOTIDE SEQUENCE [MRNA] (ISOFORM 1)</scope>
    <scope>FUNCTION</scope>
    <scope>CATALYTIC ACTIVITY</scope>
    <scope>ACTIVITY REGULATION</scope>
</reference>
<reference key="2">
    <citation type="journal article" date="2001" name="Cytogenet. Cell Genet.">
        <title>Comparative architectural aspects of regions of conserved synteny on human chromosome 11p15.3 and mouse chromosome 7 (including genes WEE1 and LMO1).</title>
        <authorList>
            <person name="Cichutek A."/>
            <person name="Brueckmann T."/>
            <person name="Seipel B."/>
            <person name="Hauser H."/>
            <person name="Schlaubitz S."/>
            <person name="Prawitt D."/>
            <person name="Hankeln T."/>
            <person name="Schmidt E.R."/>
            <person name="Winterpacht A."/>
            <person name="Zabel B.U."/>
        </authorList>
    </citation>
    <scope>NUCLEOTIDE SEQUENCE [GENOMIC DNA]</scope>
    <source>
        <tissue>Blood</tissue>
    </source>
</reference>
<reference key="3">
    <citation type="journal article" date="2004" name="Nat. Genet.">
        <title>Complete sequencing and characterization of 21,243 full-length human cDNAs.</title>
        <authorList>
            <person name="Ota T."/>
            <person name="Suzuki Y."/>
            <person name="Nishikawa T."/>
            <person name="Otsuki T."/>
            <person name="Sugiyama T."/>
            <person name="Irie R."/>
            <person name="Wakamatsu A."/>
            <person name="Hayashi K."/>
            <person name="Sato H."/>
            <person name="Nagai K."/>
            <person name="Kimura K."/>
            <person name="Makita H."/>
            <person name="Sekine M."/>
            <person name="Obayashi M."/>
            <person name="Nishi T."/>
            <person name="Shibahara T."/>
            <person name="Tanaka T."/>
            <person name="Ishii S."/>
            <person name="Yamamoto J."/>
            <person name="Saito K."/>
            <person name="Kawai Y."/>
            <person name="Isono Y."/>
            <person name="Nakamura Y."/>
            <person name="Nagahari K."/>
            <person name="Murakami K."/>
            <person name="Yasuda T."/>
            <person name="Iwayanagi T."/>
            <person name="Wagatsuma M."/>
            <person name="Shiratori A."/>
            <person name="Sudo H."/>
            <person name="Hosoiri T."/>
            <person name="Kaku Y."/>
            <person name="Kodaira H."/>
            <person name="Kondo H."/>
            <person name="Sugawara M."/>
            <person name="Takahashi M."/>
            <person name="Kanda K."/>
            <person name="Yokoi T."/>
            <person name="Furuya T."/>
            <person name="Kikkawa E."/>
            <person name="Omura Y."/>
            <person name="Abe K."/>
            <person name="Kamihara K."/>
            <person name="Katsuta N."/>
            <person name="Sato K."/>
            <person name="Tanikawa M."/>
            <person name="Yamazaki M."/>
            <person name="Ninomiya K."/>
            <person name="Ishibashi T."/>
            <person name="Yamashita H."/>
            <person name="Murakawa K."/>
            <person name="Fujimori K."/>
            <person name="Tanai H."/>
            <person name="Kimata M."/>
            <person name="Watanabe M."/>
            <person name="Hiraoka S."/>
            <person name="Chiba Y."/>
            <person name="Ishida S."/>
            <person name="Ono Y."/>
            <person name="Takiguchi S."/>
            <person name="Watanabe S."/>
            <person name="Yosida M."/>
            <person name="Hotuta T."/>
            <person name="Kusano J."/>
            <person name="Kanehori K."/>
            <person name="Takahashi-Fujii A."/>
            <person name="Hara H."/>
            <person name="Tanase T.-O."/>
            <person name="Nomura Y."/>
            <person name="Togiya S."/>
            <person name="Komai F."/>
            <person name="Hara R."/>
            <person name="Takeuchi K."/>
            <person name="Arita M."/>
            <person name="Imose N."/>
            <person name="Musashino K."/>
            <person name="Yuuki H."/>
            <person name="Oshima A."/>
            <person name="Sasaki N."/>
            <person name="Aotsuka S."/>
            <person name="Yoshikawa Y."/>
            <person name="Matsunawa H."/>
            <person name="Ichihara T."/>
            <person name="Shiohata N."/>
            <person name="Sano S."/>
            <person name="Moriya S."/>
            <person name="Momiyama H."/>
            <person name="Satoh N."/>
            <person name="Takami S."/>
            <person name="Terashima Y."/>
            <person name="Suzuki O."/>
            <person name="Nakagawa S."/>
            <person name="Senoh A."/>
            <person name="Mizoguchi H."/>
            <person name="Goto Y."/>
            <person name="Shimizu F."/>
            <person name="Wakebe H."/>
            <person name="Hishigaki H."/>
            <person name="Watanabe T."/>
            <person name="Sugiyama A."/>
            <person name="Takemoto M."/>
            <person name="Kawakami B."/>
            <person name="Yamazaki M."/>
            <person name="Watanabe K."/>
            <person name="Kumagai A."/>
            <person name="Itakura S."/>
            <person name="Fukuzumi Y."/>
            <person name="Fujimori Y."/>
            <person name="Komiyama M."/>
            <person name="Tashiro H."/>
            <person name="Tanigami A."/>
            <person name="Fujiwara T."/>
            <person name="Ono T."/>
            <person name="Yamada K."/>
            <person name="Fujii Y."/>
            <person name="Ozaki K."/>
            <person name="Hirao M."/>
            <person name="Ohmori Y."/>
            <person name="Kawabata A."/>
            <person name="Hikiji T."/>
            <person name="Kobatake N."/>
            <person name="Inagaki H."/>
            <person name="Ikema Y."/>
            <person name="Okamoto S."/>
            <person name="Okitani R."/>
            <person name="Kawakami T."/>
            <person name="Noguchi S."/>
            <person name="Itoh T."/>
            <person name="Shigeta K."/>
            <person name="Senba T."/>
            <person name="Matsumura K."/>
            <person name="Nakajima Y."/>
            <person name="Mizuno T."/>
            <person name="Morinaga M."/>
            <person name="Sasaki M."/>
            <person name="Togashi T."/>
            <person name="Oyama M."/>
            <person name="Hata H."/>
            <person name="Watanabe M."/>
            <person name="Komatsu T."/>
            <person name="Mizushima-Sugano J."/>
            <person name="Satoh T."/>
            <person name="Shirai Y."/>
            <person name="Takahashi Y."/>
            <person name="Nakagawa K."/>
            <person name="Okumura K."/>
            <person name="Nagase T."/>
            <person name="Nomura N."/>
            <person name="Kikuchi H."/>
            <person name="Masuho Y."/>
            <person name="Yamashita R."/>
            <person name="Nakai K."/>
            <person name="Yada T."/>
            <person name="Nakamura Y."/>
            <person name="Ohara O."/>
            <person name="Isogai T."/>
            <person name="Sugano S."/>
        </authorList>
    </citation>
    <scope>NUCLEOTIDE SEQUENCE [LARGE SCALE MRNA] (ISOFORM 2)</scope>
    <source>
        <tissue>Amygdala</tissue>
    </source>
</reference>
<reference key="4">
    <citation type="journal article" date="2006" name="Nature">
        <title>Human chromosome 11 DNA sequence and analysis including novel gene identification.</title>
        <authorList>
            <person name="Taylor T.D."/>
            <person name="Noguchi H."/>
            <person name="Totoki Y."/>
            <person name="Toyoda A."/>
            <person name="Kuroki Y."/>
            <person name="Dewar K."/>
            <person name="Lloyd C."/>
            <person name="Itoh T."/>
            <person name="Takeda T."/>
            <person name="Kim D.-W."/>
            <person name="She X."/>
            <person name="Barlow K.F."/>
            <person name="Bloom T."/>
            <person name="Bruford E."/>
            <person name="Chang J.L."/>
            <person name="Cuomo C.A."/>
            <person name="Eichler E."/>
            <person name="FitzGerald M.G."/>
            <person name="Jaffe D.B."/>
            <person name="LaButti K."/>
            <person name="Nicol R."/>
            <person name="Park H.-S."/>
            <person name="Seaman C."/>
            <person name="Sougnez C."/>
            <person name="Yang X."/>
            <person name="Zimmer A.R."/>
            <person name="Zody M.C."/>
            <person name="Birren B.W."/>
            <person name="Nusbaum C."/>
            <person name="Fujiyama A."/>
            <person name="Hattori M."/>
            <person name="Rogers J."/>
            <person name="Lander E.S."/>
            <person name="Sakaki Y."/>
        </authorList>
    </citation>
    <scope>NUCLEOTIDE SEQUENCE [LARGE SCALE GENOMIC DNA]</scope>
</reference>
<reference key="5">
    <citation type="submission" date="2005-09" db="EMBL/GenBank/DDBJ databases">
        <authorList>
            <person name="Mural R.J."/>
            <person name="Istrail S."/>
            <person name="Sutton G.G."/>
            <person name="Florea L."/>
            <person name="Halpern A.L."/>
            <person name="Mobarry C.M."/>
            <person name="Lippert R."/>
            <person name="Walenz B."/>
            <person name="Shatkay H."/>
            <person name="Dew I."/>
            <person name="Miller J.R."/>
            <person name="Flanigan M.J."/>
            <person name="Edwards N.J."/>
            <person name="Bolanos R."/>
            <person name="Fasulo D."/>
            <person name="Halldorsson B.V."/>
            <person name="Hannenhalli S."/>
            <person name="Turner R."/>
            <person name="Yooseph S."/>
            <person name="Lu F."/>
            <person name="Nusskern D.R."/>
            <person name="Shue B.C."/>
            <person name="Zheng X.H."/>
            <person name="Zhong F."/>
            <person name="Delcher A.L."/>
            <person name="Huson D.H."/>
            <person name="Kravitz S.A."/>
            <person name="Mouchard L."/>
            <person name="Reinert K."/>
            <person name="Remington K.A."/>
            <person name="Clark A.G."/>
            <person name="Waterman M.S."/>
            <person name="Eichler E.E."/>
            <person name="Adams M.D."/>
            <person name="Hunkapiller M.W."/>
            <person name="Myers E.W."/>
            <person name="Venter J.C."/>
        </authorList>
    </citation>
    <scope>NUCLEOTIDE SEQUENCE [LARGE SCALE GENOMIC DNA]</scope>
</reference>
<reference key="6">
    <citation type="submission" date="1994-06" db="EMBL/GenBank/DDBJ databases">
        <authorList>
            <person name="Igarashi M."/>
        </authorList>
    </citation>
    <scope>NUCLEOTIDE SEQUENCE [MRNA] OF 1-214 (ISOFORM 1)</scope>
</reference>
<reference key="7">
    <citation type="journal article" date="1991" name="Nature">
        <title>Wee1(+)-like gene in human cells.</title>
        <authorList>
            <person name="Igarashi M."/>
            <person name="Nagata A."/>
            <person name="Jinno S."/>
            <person name="Suto K."/>
            <person name="Okayama H."/>
        </authorList>
    </citation>
    <scope>NUCLEOTIDE SEQUENCE [MRNA] OF 215-646 (ISOFORM 1)</scope>
</reference>
<reference key="8">
    <citation type="journal article" date="1993" name="Cell">
        <title>Human wee1 maintains mitotic timing by protecting the nucleus from cytoplasmically activated Cdc2 kinase.</title>
        <authorList>
            <person name="Heald R."/>
            <person name="McLoughlin M."/>
            <person name="McKeon F."/>
        </authorList>
    </citation>
    <scope>FUNCTION</scope>
    <scope>SUBCELLULAR LOCATION</scope>
</reference>
<reference key="9">
    <citation type="journal article" date="1993" name="EMBO J.">
        <title>Human Wee1 kinase inhibits cell division by phosphorylating p34cdc2 exclusively on Tyr15.</title>
        <authorList>
            <person name="McGowan C.H."/>
            <person name="Russell P."/>
        </authorList>
    </citation>
    <scope>FUNCTION</scope>
    <scope>CATALYTIC ACTIVITY</scope>
    <scope>MUTAGENESIS OF LYS-328</scope>
</reference>
<reference key="10">
    <citation type="journal article" date="2004" name="J. Biol. Chem.">
        <title>Human SAD1 kinase is involved in UV-induced DNA damage checkpoint function.</title>
        <authorList>
            <person name="Lu R."/>
            <person name="Niida H."/>
            <person name="Nakanishi M."/>
        </authorList>
    </citation>
    <scope>PHOSPHORYLATION AT SER-642</scope>
    <source>
        <tissue>Testis</tissue>
    </source>
</reference>
<reference key="11">
    <citation type="journal article" date="2004" name="Proc. Natl. Acad. Sci. U.S.A.">
        <title>M-phase kinases induce phospho-dependent ubiquitination of somatic Wee1 by SCFbeta-TrCP.</title>
        <authorList>
            <person name="Watanabe N."/>
            <person name="Arai H."/>
            <person name="Nishihara Y."/>
            <person name="Taniguchi M."/>
            <person name="Watanabe N."/>
            <person name="Hunter T."/>
            <person name="Osada H."/>
        </authorList>
    </citation>
    <scope>FUNCTION</scope>
    <scope>PHOSPHORYLATION AT SER-53 AND SER-123</scope>
    <scope>UBIQUITINATION</scope>
    <scope>MUTAGENESIS OF SER-53; 116-GLU-GLU-117 AND SER-123</scope>
</reference>
<reference key="12">
    <citation type="journal article" date="2008" name="J. Proteome Res.">
        <title>Combining protein-based IMAC, peptide-based IMAC, and MudPIT for efficient phosphoproteomic analysis.</title>
        <authorList>
            <person name="Cantin G.T."/>
            <person name="Yi W."/>
            <person name="Lu B."/>
            <person name="Park S.K."/>
            <person name="Xu T."/>
            <person name="Lee J.-D."/>
            <person name="Yates J.R. III"/>
        </authorList>
    </citation>
    <scope>IDENTIFICATION BY MASS SPECTROMETRY [LARGE SCALE ANALYSIS]</scope>
    <source>
        <tissue>Cervix carcinoma</tissue>
    </source>
</reference>
<reference key="13">
    <citation type="journal article" date="2008" name="Mol. Cell">
        <title>Kinase-selective enrichment enables quantitative phosphoproteomics of the kinome across the cell cycle.</title>
        <authorList>
            <person name="Daub H."/>
            <person name="Olsen J.V."/>
            <person name="Bairlein M."/>
            <person name="Gnad F."/>
            <person name="Oppermann F.S."/>
            <person name="Korner R."/>
            <person name="Greff Z."/>
            <person name="Keri G."/>
            <person name="Stemmann O."/>
            <person name="Mann M."/>
        </authorList>
    </citation>
    <scope>PHOSPHORYLATION [LARGE SCALE ANALYSIS] AT SER-85; SER-150; THR-190 AND SER-312</scope>
    <scope>IDENTIFICATION BY MASS SPECTROMETRY [LARGE SCALE ANALYSIS]</scope>
    <source>
        <tissue>Cervix carcinoma</tissue>
    </source>
</reference>
<reference key="14">
    <citation type="journal article" date="2009" name="Sci. Signal.">
        <title>Quantitative phosphoproteomic analysis of T cell receptor signaling reveals system-wide modulation of protein-protein interactions.</title>
        <authorList>
            <person name="Mayya V."/>
            <person name="Lundgren D.H."/>
            <person name="Hwang S.-I."/>
            <person name="Rezaul K."/>
            <person name="Wu L."/>
            <person name="Eng J.K."/>
            <person name="Rodionov V."/>
            <person name="Han D.K."/>
        </authorList>
    </citation>
    <scope>PHOSPHORYLATION [LARGE SCALE ANALYSIS] AT SER-139</scope>
    <scope>IDENTIFICATION BY MASS SPECTROMETRY [LARGE SCALE ANALYSIS]</scope>
    <source>
        <tissue>Leukemic T-cell</tissue>
    </source>
</reference>
<reference key="15">
    <citation type="journal article" date="2010" name="J. Cell Sci.">
        <title>Persistence of the cell-cycle checkpoint kinase Wee1 in SadA- and SadB-deficient neurons disrupts neuronal polarity.</title>
        <authorList>
            <person name="Muller M."/>
            <person name="Lutter D."/>
            <person name="Puschel A.W."/>
        </authorList>
    </citation>
    <scope>PHOSPHORYLATION AT SER-642</scope>
    <scope>MUTAGENESIS OF SER-642</scope>
</reference>
<reference key="16">
    <citation type="journal article" date="2010" name="Sci. Signal.">
        <title>Quantitative phosphoproteomics reveals widespread full phosphorylation site occupancy during mitosis.</title>
        <authorList>
            <person name="Olsen J.V."/>
            <person name="Vermeulen M."/>
            <person name="Santamaria A."/>
            <person name="Kumar C."/>
            <person name="Miller M.L."/>
            <person name="Jensen L.J."/>
            <person name="Gnad F."/>
            <person name="Cox J."/>
            <person name="Jensen T.S."/>
            <person name="Nigg E.A."/>
            <person name="Brunak S."/>
            <person name="Mann M."/>
        </authorList>
    </citation>
    <scope>PHOSPHORYLATION [LARGE SCALE ANALYSIS] AT SER-127 AND SER-139</scope>
    <scope>IDENTIFICATION BY MASS SPECTROMETRY [LARGE SCALE ANALYSIS]</scope>
    <source>
        <tissue>Cervix carcinoma</tissue>
    </source>
</reference>
<reference key="17">
    <citation type="journal article" date="2012" name="Nat. Commun.">
        <title>Fcp1-dependent dephosphorylation is required for M-phase-promoting factor inactivation at mitosis exit.</title>
        <authorList>
            <person name="Visconti R."/>
            <person name="Palazzo L."/>
            <person name="Della Monica R."/>
            <person name="Grieco D."/>
        </authorList>
    </citation>
    <scope>PHOSPHORYLATION AT THR-239</scope>
    <scope>DEPHOSPHORYLATION</scope>
</reference>
<reference key="18">
    <citation type="journal article" date="2013" name="J. Proteome Res.">
        <title>Toward a comprehensive characterization of a human cancer cell phosphoproteome.</title>
        <authorList>
            <person name="Zhou H."/>
            <person name="Di Palma S."/>
            <person name="Preisinger C."/>
            <person name="Peng M."/>
            <person name="Polat A.N."/>
            <person name="Heck A.J."/>
            <person name="Mohammed S."/>
        </authorList>
    </citation>
    <scope>PHOSPHORYLATION [LARGE SCALE ANALYSIS] AT SER-137; SER-139; THR-187; THR-190; SER-270; SER-307 AND SER-312</scope>
    <scope>IDENTIFICATION BY MASS SPECTROMETRY [LARGE SCALE ANALYSIS]</scope>
    <source>
        <tissue>Cervix carcinoma</tissue>
        <tissue>Erythroleukemia</tissue>
    </source>
</reference>
<reference key="19">
    <citation type="journal article" date="2020" name="Mol. Cell">
        <title>CHK1 Inhibitor Blocks Phosphorylation of FAM122A and Promotes Replication Stress.</title>
        <authorList>
            <person name="Li F."/>
            <person name="Kozono D."/>
            <person name="Deraska P."/>
            <person name="Branigan T."/>
            <person name="Dunn C."/>
            <person name="Zheng X.F."/>
            <person name="Parmar K."/>
            <person name="Nguyen H."/>
            <person name="DeCaprio J."/>
            <person name="Shapiro G.I."/>
            <person name="Chowdhury D."/>
            <person name="D'Andrea A.D."/>
        </authorList>
    </citation>
    <scope>DEPHOSPHORYLATION AT SER-53 AND SER-123 BY SERINE/THREONINE-PROTEIN PHOSPHATASE 2A</scope>
</reference>
<reference key="20">
    <citation type="journal article" date="2005" name="Structure">
        <title>Structure and inhibition of the human cell cycle checkpoint kinase, Wee1A kinase: an atypical tyrosine kinase with a key role in CDK1 regulation.</title>
        <authorList>
            <person name="Squire C.J."/>
            <person name="Dickson J.M."/>
            <person name="Ivanovic I."/>
            <person name="Baker E.N."/>
        </authorList>
    </citation>
    <scope>X-RAY CRYSTALLOGRAPHY (1.81 ANGSTROMS) OF 291-575 IN COMPLEX WITH MAGNESIUM AND AN INHIBITOR</scope>
</reference>
<reference key="21">
    <citation type="journal article" date="2007" name="Nature">
        <title>Patterns of somatic mutation in human cancer genomes.</title>
        <authorList>
            <person name="Greenman C."/>
            <person name="Stephens P."/>
            <person name="Smith R."/>
            <person name="Dalgliesh G.L."/>
            <person name="Hunter C."/>
            <person name="Bignell G."/>
            <person name="Davies H."/>
            <person name="Teague J."/>
            <person name="Butler A."/>
            <person name="Stevens C."/>
            <person name="Edkins S."/>
            <person name="O'Meara S."/>
            <person name="Vastrik I."/>
            <person name="Schmidt E.E."/>
            <person name="Avis T."/>
            <person name="Barthorpe S."/>
            <person name="Bhamra G."/>
            <person name="Buck G."/>
            <person name="Choudhury B."/>
            <person name="Clements J."/>
            <person name="Cole J."/>
            <person name="Dicks E."/>
            <person name="Forbes S."/>
            <person name="Gray K."/>
            <person name="Halliday K."/>
            <person name="Harrison R."/>
            <person name="Hills K."/>
            <person name="Hinton J."/>
            <person name="Jenkinson A."/>
            <person name="Jones D."/>
            <person name="Menzies A."/>
            <person name="Mironenko T."/>
            <person name="Perry J."/>
            <person name="Raine K."/>
            <person name="Richardson D."/>
            <person name="Shepherd R."/>
            <person name="Small A."/>
            <person name="Tofts C."/>
            <person name="Varian J."/>
            <person name="Webb T."/>
            <person name="West S."/>
            <person name="Widaa S."/>
            <person name="Yates A."/>
            <person name="Cahill D.P."/>
            <person name="Louis D.N."/>
            <person name="Goldstraw P."/>
            <person name="Nicholson A.G."/>
            <person name="Brasseur F."/>
            <person name="Looijenga L."/>
            <person name="Weber B.L."/>
            <person name="Chiew Y.-E."/>
            <person name="DeFazio A."/>
            <person name="Greaves M.F."/>
            <person name="Green A.R."/>
            <person name="Campbell P."/>
            <person name="Birney E."/>
            <person name="Easton D.F."/>
            <person name="Chenevix-Trench G."/>
            <person name="Tan M.-H."/>
            <person name="Khoo S.K."/>
            <person name="Teh B.T."/>
            <person name="Yuen S.T."/>
            <person name="Leung S.Y."/>
            <person name="Wooster R."/>
            <person name="Futreal P.A."/>
            <person name="Stratton M.R."/>
        </authorList>
    </citation>
    <scope>VARIANTS [LARGE SCALE ANALYSIS] CYS-210 AND ILE-472</scope>
</reference>
<evidence type="ECO:0000250" key="1">
    <source>
        <dbReference type="UniProtKB" id="P47810"/>
    </source>
</evidence>
<evidence type="ECO:0000250" key="2">
    <source>
        <dbReference type="UniProtKB" id="Q63802"/>
    </source>
</evidence>
<evidence type="ECO:0000255" key="3">
    <source>
        <dbReference type="PROSITE-ProRule" id="PRU00159"/>
    </source>
</evidence>
<evidence type="ECO:0000255" key="4">
    <source>
        <dbReference type="PROSITE-ProRule" id="PRU10027"/>
    </source>
</evidence>
<evidence type="ECO:0000256" key="5">
    <source>
        <dbReference type="SAM" id="MobiDB-lite"/>
    </source>
</evidence>
<evidence type="ECO:0000269" key="6">
    <source>
    </source>
</evidence>
<evidence type="ECO:0000269" key="7">
    <source>
    </source>
</evidence>
<evidence type="ECO:0000269" key="8">
    <source>
    </source>
</evidence>
<evidence type="ECO:0000269" key="9">
    <source>
    </source>
</evidence>
<evidence type="ECO:0000269" key="10">
    <source>
    </source>
</evidence>
<evidence type="ECO:0000269" key="11">
    <source>
    </source>
</evidence>
<evidence type="ECO:0000269" key="12">
    <source>
    </source>
</evidence>
<evidence type="ECO:0000269" key="13">
    <source>
    </source>
</evidence>
<evidence type="ECO:0000269" key="14">
    <source>
    </source>
</evidence>
<evidence type="ECO:0000269" key="15">
    <source>
    </source>
</evidence>
<evidence type="ECO:0000303" key="16">
    <source>
    </source>
</evidence>
<evidence type="ECO:0000303" key="17">
    <source>
    </source>
</evidence>
<evidence type="ECO:0000305" key="18"/>
<evidence type="ECO:0000312" key="19">
    <source>
        <dbReference type="HGNC" id="HGNC:12761"/>
    </source>
</evidence>
<evidence type="ECO:0007744" key="20">
    <source>
    </source>
</evidence>
<evidence type="ECO:0007744" key="21">
    <source>
    </source>
</evidence>
<evidence type="ECO:0007744" key="22">
    <source>
    </source>
</evidence>
<evidence type="ECO:0007744" key="23">
    <source>
    </source>
</evidence>
<evidence type="ECO:0007829" key="24">
    <source>
        <dbReference type="PDB" id="5VD5"/>
    </source>
</evidence>
<evidence type="ECO:0007829" key="25">
    <source>
        <dbReference type="PDB" id="5VD8"/>
    </source>
</evidence>
<evidence type="ECO:0007829" key="26">
    <source>
        <dbReference type="PDB" id="8BJU"/>
    </source>
</evidence>
<dbReference type="EC" id="2.7.10.2" evidence="13 15"/>
<dbReference type="EMBL" id="U10564">
    <property type="protein sequence ID" value="AAB60401.1"/>
    <property type="molecule type" value="mRNA"/>
</dbReference>
<dbReference type="EMBL" id="AJ277546">
    <property type="protein sequence ID" value="CAC14173.1"/>
    <property type="molecule type" value="Genomic_DNA"/>
</dbReference>
<dbReference type="EMBL" id="AK122837">
    <property type="protein sequence ID" value="BAG53753.1"/>
    <property type="molecule type" value="mRNA"/>
</dbReference>
<dbReference type="EMBL" id="AC011979">
    <property type="status" value="NOT_ANNOTATED_CDS"/>
    <property type="molecule type" value="Genomic_DNA"/>
</dbReference>
<dbReference type="EMBL" id="AC122179">
    <property type="status" value="NOT_ANNOTATED_CDS"/>
    <property type="molecule type" value="Genomic_DNA"/>
</dbReference>
<dbReference type="EMBL" id="CH471064">
    <property type="protein sequence ID" value="EAW68586.1"/>
    <property type="molecule type" value="Genomic_DNA"/>
</dbReference>
<dbReference type="EMBL" id="CH471064">
    <property type="protein sequence ID" value="EAW68587.1"/>
    <property type="molecule type" value="Genomic_DNA"/>
</dbReference>
<dbReference type="EMBL" id="CH471064">
    <property type="protein sequence ID" value="EAW68588.1"/>
    <property type="molecule type" value="Genomic_DNA"/>
</dbReference>
<dbReference type="EMBL" id="X62048">
    <property type="protein sequence ID" value="CAA43979.1"/>
    <property type="molecule type" value="mRNA"/>
</dbReference>
<dbReference type="CCDS" id="CCDS44536.1">
    <molecule id="P30291-2"/>
</dbReference>
<dbReference type="CCDS" id="CCDS7800.1">
    <molecule id="P30291-1"/>
</dbReference>
<dbReference type="PIR" id="S55048">
    <property type="entry name" value="S55048"/>
</dbReference>
<dbReference type="RefSeq" id="NP_001137448.1">
    <molecule id="P30291-2"/>
    <property type="nucleotide sequence ID" value="NM_001143976.2"/>
</dbReference>
<dbReference type="RefSeq" id="NP_003381.1">
    <molecule id="P30291-1"/>
    <property type="nucleotide sequence ID" value="NM_003390.4"/>
</dbReference>
<dbReference type="RefSeq" id="XP_047283495.1">
    <molecule id="P30291-2"/>
    <property type="nucleotide sequence ID" value="XM_047427539.1"/>
</dbReference>
<dbReference type="RefSeq" id="XP_054225826.1">
    <molecule id="P30291-2"/>
    <property type="nucleotide sequence ID" value="XM_054369851.1"/>
</dbReference>
<dbReference type="PDB" id="1X8B">
    <property type="method" value="X-ray"/>
    <property type="resolution" value="1.81 A"/>
    <property type="chains" value="A=291-575"/>
</dbReference>
<dbReference type="PDB" id="2IN6">
    <property type="method" value="X-ray"/>
    <property type="resolution" value="1.90 A"/>
    <property type="chains" value="A=291-575"/>
</dbReference>
<dbReference type="PDB" id="2IO6">
    <property type="method" value="X-ray"/>
    <property type="resolution" value="2.20 A"/>
    <property type="chains" value="A=291-575"/>
</dbReference>
<dbReference type="PDB" id="2Z2W">
    <property type="method" value="X-ray"/>
    <property type="resolution" value="2.22 A"/>
    <property type="chains" value="A=291-575"/>
</dbReference>
<dbReference type="PDB" id="3BI6">
    <property type="method" value="X-ray"/>
    <property type="resolution" value="2.20 A"/>
    <property type="chains" value="A=291-575"/>
</dbReference>
<dbReference type="PDB" id="3BIZ">
    <property type="method" value="X-ray"/>
    <property type="resolution" value="2.20 A"/>
    <property type="chains" value="A=291-575"/>
</dbReference>
<dbReference type="PDB" id="3CQE">
    <property type="method" value="X-ray"/>
    <property type="resolution" value="2.50 A"/>
    <property type="chains" value="A=291-575"/>
</dbReference>
<dbReference type="PDB" id="3CR0">
    <property type="method" value="X-ray"/>
    <property type="resolution" value="2.30 A"/>
    <property type="chains" value="A=291-575"/>
</dbReference>
<dbReference type="PDB" id="5V5Y">
    <property type="method" value="X-ray"/>
    <property type="resolution" value="1.90 A"/>
    <property type="chains" value="A=291-575"/>
</dbReference>
<dbReference type="PDB" id="5VC3">
    <property type="method" value="X-ray"/>
    <property type="resolution" value="1.97 A"/>
    <property type="chains" value="A=291-575"/>
</dbReference>
<dbReference type="PDB" id="5VC4">
    <property type="method" value="X-ray"/>
    <property type="resolution" value="2.10 A"/>
    <property type="chains" value="A=291-575"/>
</dbReference>
<dbReference type="PDB" id="5VC5">
    <property type="method" value="X-ray"/>
    <property type="resolution" value="1.93 A"/>
    <property type="chains" value="A=291-575"/>
</dbReference>
<dbReference type="PDB" id="5VC6">
    <property type="method" value="X-ray"/>
    <property type="resolution" value="2.00 A"/>
    <property type="chains" value="A=291-575"/>
</dbReference>
<dbReference type="PDB" id="5VD2">
    <property type="method" value="X-ray"/>
    <property type="resolution" value="2.05 A"/>
    <property type="chains" value="A=291-575"/>
</dbReference>
<dbReference type="PDB" id="5VD4">
    <property type="method" value="X-ray"/>
    <property type="resolution" value="2.02 A"/>
    <property type="chains" value="A=291-575"/>
</dbReference>
<dbReference type="PDB" id="5VD5">
    <property type="method" value="X-ray"/>
    <property type="resolution" value="2.05 A"/>
    <property type="chains" value="A=291-575"/>
</dbReference>
<dbReference type="PDB" id="5VD7">
    <property type="method" value="X-ray"/>
    <property type="resolution" value="2.08 A"/>
    <property type="chains" value="A=291-575"/>
</dbReference>
<dbReference type="PDB" id="5VD8">
    <property type="method" value="X-ray"/>
    <property type="resolution" value="1.85 A"/>
    <property type="chains" value="A=291-575"/>
</dbReference>
<dbReference type="PDB" id="5VD9">
    <property type="method" value="X-ray"/>
    <property type="resolution" value="1.87 A"/>
    <property type="chains" value="A=291-575"/>
</dbReference>
<dbReference type="PDB" id="5VDA">
    <property type="method" value="X-ray"/>
    <property type="resolution" value="2.10 A"/>
    <property type="chains" value="A=291-575"/>
</dbReference>
<dbReference type="PDB" id="7N3U">
    <property type="method" value="X-ray"/>
    <property type="resolution" value="2.65 A"/>
    <property type="chains" value="A=291-575"/>
</dbReference>
<dbReference type="PDB" id="8BJU">
    <property type="method" value="X-ray"/>
    <property type="resolution" value="1.53 A"/>
    <property type="chains" value="A=291-575"/>
</dbReference>
<dbReference type="PDB" id="8WDK">
    <property type="method" value="EM"/>
    <property type="resolution" value="3.64 A"/>
    <property type="chains" value="W=291-575"/>
</dbReference>
<dbReference type="PDBsum" id="1X8B"/>
<dbReference type="PDBsum" id="2IN6"/>
<dbReference type="PDBsum" id="2IO6"/>
<dbReference type="PDBsum" id="2Z2W"/>
<dbReference type="PDBsum" id="3BI6"/>
<dbReference type="PDBsum" id="3BIZ"/>
<dbReference type="PDBsum" id="3CQE"/>
<dbReference type="PDBsum" id="3CR0"/>
<dbReference type="PDBsum" id="5V5Y"/>
<dbReference type="PDBsum" id="5VC3"/>
<dbReference type="PDBsum" id="5VC4"/>
<dbReference type="PDBsum" id="5VC5"/>
<dbReference type="PDBsum" id="5VC6"/>
<dbReference type="PDBsum" id="5VD2"/>
<dbReference type="PDBsum" id="5VD4"/>
<dbReference type="PDBsum" id="5VD5"/>
<dbReference type="PDBsum" id="5VD7"/>
<dbReference type="PDBsum" id="5VD8"/>
<dbReference type="PDBsum" id="5VD9"/>
<dbReference type="PDBsum" id="5VDA"/>
<dbReference type="PDBsum" id="7N3U"/>
<dbReference type="PDBsum" id="8BJU"/>
<dbReference type="PDBsum" id="8WDK"/>
<dbReference type="EMDB" id="EMD-37464"/>
<dbReference type="SMR" id="P30291"/>
<dbReference type="BioGRID" id="113303">
    <property type="interactions" value="130"/>
</dbReference>
<dbReference type="DIP" id="DIP-37969N"/>
<dbReference type="FunCoup" id="P30291">
    <property type="interactions" value="4211"/>
</dbReference>
<dbReference type="IntAct" id="P30291">
    <property type="interactions" value="41"/>
</dbReference>
<dbReference type="MINT" id="P30291"/>
<dbReference type="STRING" id="9606.ENSP00000402084"/>
<dbReference type="BindingDB" id="P30291"/>
<dbReference type="ChEMBL" id="CHEMBL5491"/>
<dbReference type="DrugBank" id="DB07265">
    <property type="generic name" value="3-(9-HYDROXY-1,3-DIOXO-4-PHENYL-2,3-DIHYDROPYRROLO[3,4-C]CARBAZOL-6(1H)-YL)PROPANOIC ACID"/>
</dbReference>
<dbReference type="DrugBank" id="DB07257">
    <property type="generic name" value="4-(2-chlorophenyl)-8-(2-hydroxyethyl)-6-methylpyrrolo[3,4-e]indole-1,3(2H,6H)-dione"/>
</dbReference>
<dbReference type="DrugBank" id="DB08365">
    <property type="generic name" value="8-bromo-4-(2-chlorophenyl)-N-(2-hydroxyethyl)-6-methyl-1,3-dioxo-1,2,3,6-tetrahydropyrrolo[3,4-e]indole-7-carboxamide"/>
</dbReference>
<dbReference type="DrugBank" id="DB04608">
    <property type="generic name" value="9-HYDROXY-4-PHENYL-6H-PYRROLO[3,4-C]CARBAZOLE-1,3-DIONE"/>
</dbReference>
<dbReference type="DrugBank" id="DB07006">
    <property type="generic name" value="9-HYDROXY-6-(3-HYDROXYPROPYL)-4-(2-METHOXYPHENYL)PYRROLO[3,4-C]CARBAZOLE-1,3(2H,6H)-DIONE"/>
</dbReference>
<dbReference type="DrugBank" id="DB11740">
    <property type="generic name" value="Adavosertib"/>
</dbReference>
<dbReference type="DrugBank" id="DB12010">
    <property type="generic name" value="Fostamatinib"/>
</dbReference>
<dbReference type="DrugBank" id="DB07226">
    <property type="generic name" value="N-[4-(2-CHLOROPHENYL)-1,3-DIOXO-1,2,3,6-TETRAHYDROPYRROLO[3,4-C]CARBAZOL-9-YL]FORMAMIDE"/>
</dbReference>
<dbReference type="DrugCentral" id="P30291"/>
<dbReference type="GuidetoPHARMACOLOGY" id="2278"/>
<dbReference type="GlyGen" id="P30291">
    <property type="glycosylation" value="1 site, 1 O-linked glycan (1 site)"/>
</dbReference>
<dbReference type="iPTMnet" id="P30291"/>
<dbReference type="PhosphoSitePlus" id="P30291"/>
<dbReference type="BioMuta" id="WEE1"/>
<dbReference type="DMDM" id="1351419"/>
<dbReference type="CPTAC" id="CPTAC-3168"/>
<dbReference type="CPTAC" id="CPTAC-3169"/>
<dbReference type="jPOST" id="P30291"/>
<dbReference type="MassIVE" id="P30291"/>
<dbReference type="PaxDb" id="9606-ENSP00000402084"/>
<dbReference type="PeptideAtlas" id="P30291"/>
<dbReference type="ProteomicsDB" id="3755"/>
<dbReference type="ProteomicsDB" id="54650">
    <molecule id="P30291-1"/>
</dbReference>
<dbReference type="Pumba" id="P30291"/>
<dbReference type="Antibodypedia" id="3903">
    <property type="antibodies" value="649 antibodies from 39 providers"/>
</dbReference>
<dbReference type="DNASU" id="7465"/>
<dbReference type="Ensembl" id="ENST00000299613.10">
    <molecule id="P30291-2"/>
    <property type="protein sequence ID" value="ENSP00000299613.5"/>
    <property type="gene ID" value="ENSG00000166483.12"/>
</dbReference>
<dbReference type="Ensembl" id="ENST00000450114.7">
    <molecule id="P30291-1"/>
    <property type="protein sequence ID" value="ENSP00000402084.2"/>
    <property type="gene ID" value="ENSG00000166483.12"/>
</dbReference>
<dbReference type="Ensembl" id="ENST00000681684.1">
    <molecule id="P30291-2"/>
    <property type="protein sequence ID" value="ENSP00000506667.1"/>
    <property type="gene ID" value="ENSG00000166483.12"/>
</dbReference>
<dbReference type="GeneID" id="7465"/>
<dbReference type="KEGG" id="hsa:7465"/>
<dbReference type="MANE-Select" id="ENST00000450114.7">
    <property type="protein sequence ID" value="ENSP00000402084.2"/>
    <property type="RefSeq nucleotide sequence ID" value="NM_003390.4"/>
    <property type="RefSeq protein sequence ID" value="NP_003381.1"/>
</dbReference>
<dbReference type="UCSC" id="uc001mhs.4">
    <molecule id="P30291-1"/>
    <property type="organism name" value="human"/>
</dbReference>
<dbReference type="AGR" id="HGNC:12761"/>
<dbReference type="CTD" id="7465"/>
<dbReference type="DisGeNET" id="7465"/>
<dbReference type="GeneCards" id="WEE1"/>
<dbReference type="HGNC" id="HGNC:12761">
    <property type="gene designation" value="WEE1"/>
</dbReference>
<dbReference type="HPA" id="ENSG00000166483">
    <property type="expression patterns" value="Low tissue specificity"/>
</dbReference>
<dbReference type="MalaCards" id="WEE1"/>
<dbReference type="MIM" id="193525">
    <property type="type" value="gene"/>
</dbReference>
<dbReference type="neXtProt" id="NX_P30291"/>
<dbReference type="OpenTargets" id="ENSG00000166483"/>
<dbReference type="PharmGKB" id="PA366"/>
<dbReference type="VEuPathDB" id="HostDB:ENSG00000166483"/>
<dbReference type="eggNOG" id="KOG0601">
    <property type="taxonomic scope" value="Eukaryota"/>
</dbReference>
<dbReference type="GeneTree" id="ENSGT00940000157939"/>
<dbReference type="HOGENOM" id="CLU_000288_25_1_1"/>
<dbReference type="InParanoid" id="P30291"/>
<dbReference type="OMA" id="TIFNHPV"/>
<dbReference type="OrthoDB" id="5337378at2759"/>
<dbReference type="PAN-GO" id="P30291">
    <property type="GO annotations" value="2 GO annotations based on evolutionary models"/>
</dbReference>
<dbReference type="PhylomeDB" id="P30291"/>
<dbReference type="TreeFam" id="TF101088"/>
<dbReference type="BRENDA" id="2.7.10.2">
    <property type="organism ID" value="2681"/>
</dbReference>
<dbReference type="PathwayCommons" id="P30291"/>
<dbReference type="Reactome" id="R-HSA-156711">
    <property type="pathway name" value="Polo-like kinase mediated events"/>
</dbReference>
<dbReference type="Reactome" id="R-HSA-69202">
    <property type="pathway name" value="Cyclin E associated events during G1/S transition"/>
</dbReference>
<dbReference type="Reactome" id="R-HSA-69273">
    <property type="pathway name" value="Cyclin A/B1/B2 associated events during G2/M transition"/>
</dbReference>
<dbReference type="Reactome" id="R-HSA-69478">
    <property type="pathway name" value="G2/M DNA replication checkpoint"/>
</dbReference>
<dbReference type="Reactome" id="R-HSA-69656">
    <property type="pathway name" value="Cyclin A:Cdk2-associated events at S phase entry"/>
</dbReference>
<dbReference type="Reactome" id="R-HSA-75035">
    <property type="pathway name" value="Chk1/Chk2(Cds1) mediated inactivation of Cyclin B:Cdk1 complex"/>
</dbReference>
<dbReference type="Reactome" id="R-HSA-983231">
    <property type="pathway name" value="Factors involved in megakaryocyte development and platelet production"/>
</dbReference>
<dbReference type="SignaLink" id="P30291"/>
<dbReference type="SIGNOR" id="P30291"/>
<dbReference type="BioGRID-ORCS" id="7465">
    <property type="hits" value="839 hits in 1204 CRISPR screens"/>
</dbReference>
<dbReference type="ChiTaRS" id="WEE1">
    <property type="organism name" value="human"/>
</dbReference>
<dbReference type="EvolutionaryTrace" id="P30291"/>
<dbReference type="GeneWiki" id="Wee1-like_protein_kinase"/>
<dbReference type="GenomeRNAi" id="7465"/>
<dbReference type="Pharos" id="P30291">
    <property type="development level" value="Tchem"/>
</dbReference>
<dbReference type="PRO" id="PR:P30291"/>
<dbReference type="Proteomes" id="UP000005640">
    <property type="component" value="Chromosome 11"/>
</dbReference>
<dbReference type="RNAct" id="P30291">
    <property type="molecule type" value="protein"/>
</dbReference>
<dbReference type="Bgee" id="ENSG00000166483">
    <property type="expression patterns" value="Expressed in ventricular zone and 184 other cell types or tissues"/>
</dbReference>
<dbReference type="ExpressionAtlas" id="P30291">
    <property type="expression patterns" value="baseline and differential"/>
</dbReference>
<dbReference type="GO" id="GO:0005737">
    <property type="term" value="C:cytoplasm"/>
    <property type="evidence" value="ECO:0000318"/>
    <property type="project" value="GO_Central"/>
</dbReference>
<dbReference type="GO" id="GO:0005730">
    <property type="term" value="C:nucleolus"/>
    <property type="evidence" value="ECO:0000314"/>
    <property type="project" value="HPA"/>
</dbReference>
<dbReference type="GO" id="GO:0005654">
    <property type="term" value="C:nucleoplasm"/>
    <property type="evidence" value="ECO:0000304"/>
    <property type="project" value="Reactome"/>
</dbReference>
<dbReference type="GO" id="GO:0005634">
    <property type="term" value="C:nucleus"/>
    <property type="evidence" value="ECO:0000314"/>
    <property type="project" value="UniProtKB"/>
</dbReference>
<dbReference type="GO" id="GO:0005524">
    <property type="term" value="F:ATP binding"/>
    <property type="evidence" value="ECO:0007669"/>
    <property type="project" value="UniProtKB-KW"/>
</dbReference>
<dbReference type="GO" id="GO:0000287">
    <property type="term" value="F:magnesium ion binding"/>
    <property type="evidence" value="ECO:0007669"/>
    <property type="project" value="InterPro"/>
</dbReference>
<dbReference type="GO" id="GO:0004715">
    <property type="term" value="F:non-membrane spanning protein tyrosine kinase activity"/>
    <property type="evidence" value="ECO:0007669"/>
    <property type="project" value="UniProtKB-EC"/>
</dbReference>
<dbReference type="GO" id="GO:0004713">
    <property type="term" value="F:protein tyrosine kinase activity"/>
    <property type="evidence" value="ECO:0000314"/>
    <property type="project" value="UniProtKB"/>
</dbReference>
<dbReference type="GO" id="GO:0051301">
    <property type="term" value="P:cell division"/>
    <property type="evidence" value="ECO:0007669"/>
    <property type="project" value="UniProtKB-KW"/>
</dbReference>
<dbReference type="GO" id="GO:0030010">
    <property type="term" value="P:establishment of cell polarity"/>
    <property type="evidence" value="ECO:0007669"/>
    <property type="project" value="Ensembl"/>
</dbReference>
<dbReference type="GO" id="GO:0000086">
    <property type="term" value="P:G2/M transition of mitotic cell cycle"/>
    <property type="evidence" value="ECO:0000304"/>
    <property type="project" value="Reactome"/>
</dbReference>
<dbReference type="GO" id="GO:0000226">
    <property type="term" value="P:microtubule cytoskeleton organization"/>
    <property type="evidence" value="ECO:0007669"/>
    <property type="project" value="Ensembl"/>
</dbReference>
<dbReference type="GO" id="GO:2000134">
    <property type="term" value="P:negative regulation of G1/S transition of mitotic cell cycle"/>
    <property type="evidence" value="ECO:0000304"/>
    <property type="project" value="Reactome"/>
</dbReference>
<dbReference type="GO" id="GO:0010972">
    <property type="term" value="P:negative regulation of G2/M transition of mitotic cell cycle"/>
    <property type="evidence" value="ECO:0000314"/>
    <property type="project" value="UniProtKB"/>
</dbReference>
<dbReference type="GO" id="GO:0048812">
    <property type="term" value="P:neuron projection morphogenesis"/>
    <property type="evidence" value="ECO:0007669"/>
    <property type="project" value="Ensembl"/>
</dbReference>
<dbReference type="GO" id="GO:0045740">
    <property type="term" value="P:positive regulation of DNA replication"/>
    <property type="evidence" value="ECO:0000304"/>
    <property type="project" value="Reactome"/>
</dbReference>
<dbReference type="CDD" id="cd14138">
    <property type="entry name" value="PTKc_Wee1a"/>
    <property type="match status" value="1"/>
</dbReference>
<dbReference type="DisProt" id="DP00611"/>
<dbReference type="FunFam" id="3.30.200.20:FF:000115">
    <property type="entry name" value="Wee1-like kinase 2"/>
    <property type="match status" value="1"/>
</dbReference>
<dbReference type="FunFam" id="1.10.510.10:FF:000217">
    <property type="entry name" value="Wee1-like protein kinase"/>
    <property type="match status" value="1"/>
</dbReference>
<dbReference type="Gene3D" id="3.30.200.20">
    <property type="entry name" value="Phosphorylase Kinase, domain 1"/>
    <property type="match status" value="1"/>
</dbReference>
<dbReference type="Gene3D" id="1.10.510.10">
    <property type="entry name" value="Transferase(Phosphotransferase) domain 1"/>
    <property type="match status" value="1"/>
</dbReference>
<dbReference type="InterPro" id="IPR050339">
    <property type="entry name" value="CC_SR_Kinase"/>
</dbReference>
<dbReference type="InterPro" id="IPR011009">
    <property type="entry name" value="Kinase-like_dom_sf"/>
</dbReference>
<dbReference type="InterPro" id="IPR000719">
    <property type="entry name" value="Prot_kinase_dom"/>
</dbReference>
<dbReference type="InterPro" id="IPR017441">
    <property type="entry name" value="Protein_kinase_ATP_BS"/>
</dbReference>
<dbReference type="InterPro" id="IPR008271">
    <property type="entry name" value="Ser/Thr_kinase_AS"/>
</dbReference>
<dbReference type="InterPro" id="IPR017164">
    <property type="entry name" value="Wee1-like_protein_kinase"/>
</dbReference>
<dbReference type="PANTHER" id="PTHR11042">
    <property type="entry name" value="EUKARYOTIC TRANSLATION INITIATION FACTOR 2-ALPHA KINASE EIF2-ALPHA KINASE -RELATED"/>
    <property type="match status" value="1"/>
</dbReference>
<dbReference type="PANTHER" id="PTHR11042:SF72">
    <property type="entry name" value="WEE1-LIKE PROTEIN KINASE"/>
    <property type="match status" value="1"/>
</dbReference>
<dbReference type="Pfam" id="PF00069">
    <property type="entry name" value="Pkinase"/>
    <property type="match status" value="1"/>
</dbReference>
<dbReference type="PIRSF" id="PIRSF037281">
    <property type="entry name" value="Wee1-like_protein_kinase"/>
    <property type="match status" value="1"/>
</dbReference>
<dbReference type="SMART" id="SM00220">
    <property type="entry name" value="S_TKc"/>
    <property type="match status" value="1"/>
</dbReference>
<dbReference type="SUPFAM" id="SSF56112">
    <property type="entry name" value="Protein kinase-like (PK-like)"/>
    <property type="match status" value="1"/>
</dbReference>
<dbReference type="PROSITE" id="PS00107">
    <property type="entry name" value="PROTEIN_KINASE_ATP"/>
    <property type="match status" value="1"/>
</dbReference>
<dbReference type="PROSITE" id="PS50011">
    <property type="entry name" value="PROTEIN_KINASE_DOM"/>
    <property type="match status" value="1"/>
</dbReference>
<dbReference type="PROSITE" id="PS00108">
    <property type="entry name" value="PROTEIN_KINASE_ST"/>
    <property type="match status" value="1"/>
</dbReference>
<proteinExistence type="evidence at protein level"/>
<gene>
    <name evidence="17 19" type="primary">WEE1</name>
</gene>
<accession>P30291</accession>
<accession>B3KVE1</accession>
<accession>D3DQV0</accession>